<organismHost>
    <name type="scientific">Escherichia coli</name>
    <dbReference type="NCBI Taxonomy" id="562"/>
</organismHost>
<keyword id="KW-1185">Reference proteome</keyword>
<reference key="1">
    <citation type="journal article" date="2003" name="Microbiol. Mol. Biol. Rev.">
        <title>Bacteriophage T4 genome.</title>
        <authorList>
            <person name="Miller E.S."/>
            <person name="Kutter E."/>
            <person name="Mosig G."/>
            <person name="Arisaka F."/>
            <person name="Kunisawa T."/>
            <person name="Ruger W."/>
        </authorList>
    </citation>
    <scope>NUCLEOTIDE SEQUENCE [LARGE SCALE GENOMIC DNA]</scope>
</reference>
<feature type="chain" id="PRO_0000165179" description="Uncharacterized 10.1 kDa protein in cd-pseT intergenic region">
    <location>
        <begin position="1"/>
        <end position="91"/>
    </location>
</feature>
<proteinExistence type="predicted"/>
<dbReference type="EMBL" id="AF158101">
    <property type="protein sequence ID" value="AAD42549.1"/>
    <property type="molecule type" value="Genomic_DNA"/>
</dbReference>
<dbReference type="RefSeq" id="NP_049831.1">
    <property type="nucleotide sequence ID" value="NC_000866.4"/>
</dbReference>
<dbReference type="GeneID" id="1258599"/>
<dbReference type="KEGG" id="vg:1258599"/>
<dbReference type="OrthoDB" id="18580at10239"/>
<dbReference type="Proteomes" id="UP000009087">
    <property type="component" value="Segment"/>
</dbReference>
<dbReference type="InterPro" id="IPR055779">
    <property type="entry name" value="DUF7355"/>
</dbReference>
<dbReference type="Pfam" id="PF24051">
    <property type="entry name" value="DUF7355"/>
    <property type="match status" value="1"/>
</dbReference>
<organism>
    <name type="scientific">Enterobacteria phage T4</name>
    <name type="common">Bacteriophage T4</name>
    <dbReference type="NCBI Taxonomy" id="10665"/>
    <lineage>
        <taxon>Viruses</taxon>
        <taxon>Duplodnaviria</taxon>
        <taxon>Heunggongvirae</taxon>
        <taxon>Uroviricota</taxon>
        <taxon>Caudoviricetes</taxon>
        <taxon>Straboviridae</taxon>
        <taxon>Tevenvirinae</taxon>
        <taxon>Tequatrovirus</taxon>
    </lineage>
</organism>
<gene>
    <name type="primary">y13F</name>
    <name type="synonym">cd.3</name>
</gene>
<accession>P39499</accession>
<protein>
    <recommendedName>
        <fullName>Uncharacterized 10.1 kDa protein in cd-pseT intergenic region</fullName>
    </recommendedName>
</protein>
<sequence length="91" mass="10131">MFPTYSKIVEVVFSQIIANNMFEKLDNAAELRIHAQVTHVLNTLLPDQVDSIAITLYPGSAHIIVVFGLDAELVIKGDIRFESQTAEFKAI</sequence>
<name>Y13F_BPT4</name>